<sequence length="139" mass="15234">MKKGVLLNADISAVISRLGHTDQIVIGDAGLPIPATTTRIDLALTRGVPGFLQVVDVVTQEMQVENAYLAEEIVKNNPQLHEALLVLLTQLEQRQENQIALRYISHEAFKEQTKQSRAVIRSGECSPFANIILGSGVTF</sequence>
<feature type="chain" id="PRO_0000346302" description="D-ribose pyranase">
    <location>
        <begin position="1"/>
        <end position="139"/>
    </location>
</feature>
<feature type="active site" description="Proton donor" evidence="1">
    <location>
        <position position="20"/>
    </location>
</feature>
<feature type="binding site" evidence="1">
    <location>
        <position position="28"/>
    </location>
    <ligand>
        <name>substrate</name>
    </ligand>
</feature>
<feature type="binding site" evidence="1">
    <location>
        <position position="106"/>
    </location>
    <ligand>
        <name>substrate</name>
    </ligand>
</feature>
<feature type="binding site" evidence="1">
    <location>
        <begin position="128"/>
        <end position="130"/>
    </location>
    <ligand>
        <name>substrate</name>
    </ligand>
</feature>
<name>RBSD_YERPP</name>
<organism>
    <name type="scientific">Yersinia pestis (strain Pestoides F)</name>
    <dbReference type="NCBI Taxonomy" id="386656"/>
    <lineage>
        <taxon>Bacteria</taxon>
        <taxon>Pseudomonadati</taxon>
        <taxon>Pseudomonadota</taxon>
        <taxon>Gammaproteobacteria</taxon>
        <taxon>Enterobacterales</taxon>
        <taxon>Yersiniaceae</taxon>
        <taxon>Yersinia</taxon>
    </lineage>
</organism>
<evidence type="ECO:0000255" key="1">
    <source>
        <dbReference type="HAMAP-Rule" id="MF_01661"/>
    </source>
</evidence>
<reference key="1">
    <citation type="submission" date="2007-02" db="EMBL/GenBank/DDBJ databases">
        <title>Complete sequence of chromosome of Yersinia pestis Pestoides F.</title>
        <authorList>
            <consortium name="US DOE Joint Genome Institute"/>
            <person name="Copeland A."/>
            <person name="Lucas S."/>
            <person name="Lapidus A."/>
            <person name="Barry K."/>
            <person name="Detter J.C."/>
            <person name="Glavina del Rio T."/>
            <person name="Hammon N."/>
            <person name="Israni S."/>
            <person name="Dalin E."/>
            <person name="Tice H."/>
            <person name="Pitluck S."/>
            <person name="Di Bartolo G."/>
            <person name="Chain P."/>
            <person name="Malfatti S."/>
            <person name="Shin M."/>
            <person name="Vergez L."/>
            <person name="Schmutz J."/>
            <person name="Larimer F."/>
            <person name="Land M."/>
            <person name="Hauser L."/>
            <person name="Worsham P."/>
            <person name="Chu M."/>
            <person name="Bearden S."/>
            <person name="Garcia E."/>
            <person name="Richardson P."/>
        </authorList>
    </citation>
    <scope>NUCLEOTIDE SEQUENCE [LARGE SCALE GENOMIC DNA]</scope>
    <source>
        <strain>Pestoides F</strain>
    </source>
</reference>
<proteinExistence type="inferred from homology"/>
<gene>
    <name evidence="1" type="primary">rbsD</name>
    <name type="ordered locus">YPDSF_3898</name>
</gene>
<accession>A4TSH7</accession>
<keyword id="KW-0119">Carbohydrate metabolism</keyword>
<keyword id="KW-0963">Cytoplasm</keyword>
<keyword id="KW-0413">Isomerase</keyword>
<comment type="function">
    <text evidence="1">Catalyzes the interconversion of beta-pyran and beta-furan forms of D-ribose.</text>
</comment>
<comment type="catalytic activity">
    <reaction evidence="1">
        <text>beta-D-ribopyranose = beta-D-ribofuranose</text>
        <dbReference type="Rhea" id="RHEA:25432"/>
        <dbReference type="ChEBI" id="CHEBI:27476"/>
        <dbReference type="ChEBI" id="CHEBI:47002"/>
        <dbReference type="EC" id="5.4.99.62"/>
    </reaction>
</comment>
<comment type="pathway">
    <text evidence="1">Carbohydrate metabolism; D-ribose degradation; D-ribose 5-phosphate from beta-D-ribopyranose: step 1/2.</text>
</comment>
<comment type="subunit">
    <text evidence="1">Homodecamer.</text>
</comment>
<comment type="subcellular location">
    <subcellularLocation>
        <location evidence="1">Cytoplasm</location>
    </subcellularLocation>
</comment>
<comment type="similarity">
    <text evidence="1">Belongs to the RbsD / FucU family. RbsD subfamily.</text>
</comment>
<protein>
    <recommendedName>
        <fullName evidence="1">D-ribose pyranase</fullName>
        <ecNumber evidence="1">5.4.99.62</ecNumber>
    </recommendedName>
</protein>
<dbReference type="EC" id="5.4.99.62" evidence="1"/>
<dbReference type="EMBL" id="CP000668">
    <property type="protein sequence ID" value="ABP42239.1"/>
    <property type="molecule type" value="Genomic_DNA"/>
</dbReference>
<dbReference type="RefSeq" id="WP_002212252.1">
    <property type="nucleotide sequence ID" value="NZ_CP009715.1"/>
</dbReference>
<dbReference type="SMR" id="A4TSH7"/>
<dbReference type="GeneID" id="57974587"/>
<dbReference type="KEGG" id="ypp:YPDSF_3898"/>
<dbReference type="PATRIC" id="fig|386656.14.peg.619"/>
<dbReference type="UniPathway" id="UPA00916">
    <property type="reaction ID" value="UER00888"/>
</dbReference>
<dbReference type="GO" id="GO:0005829">
    <property type="term" value="C:cytosol"/>
    <property type="evidence" value="ECO:0007669"/>
    <property type="project" value="TreeGrafter"/>
</dbReference>
<dbReference type="GO" id="GO:0062193">
    <property type="term" value="F:D-ribose pyranase activity"/>
    <property type="evidence" value="ECO:0007669"/>
    <property type="project" value="UniProtKB-EC"/>
</dbReference>
<dbReference type="GO" id="GO:0016872">
    <property type="term" value="F:intramolecular lyase activity"/>
    <property type="evidence" value="ECO:0007669"/>
    <property type="project" value="UniProtKB-UniRule"/>
</dbReference>
<dbReference type="GO" id="GO:0048029">
    <property type="term" value="F:monosaccharide binding"/>
    <property type="evidence" value="ECO:0007669"/>
    <property type="project" value="InterPro"/>
</dbReference>
<dbReference type="GO" id="GO:0019303">
    <property type="term" value="P:D-ribose catabolic process"/>
    <property type="evidence" value="ECO:0007669"/>
    <property type="project" value="UniProtKB-UniRule"/>
</dbReference>
<dbReference type="FunFam" id="3.40.1650.10:FF:000002">
    <property type="entry name" value="D-ribose pyranase"/>
    <property type="match status" value="1"/>
</dbReference>
<dbReference type="Gene3D" id="3.40.1650.10">
    <property type="entry name" value="RbsD-like domain"/>
    <property type="match status" value="1"/>
</dbReference>
<dbReference type="HAMAP" id="MF_01661">
    <property type="entry name" value="D_rib_pyranase"/>
    <property type="match status" value="1"/>
</dbReference>
<dbReference type="InterPro" id="IPR023064">
    <property type="entry name" value="D-ribose_pyranase"/>
</dbReference>
<dbReference type="InterPro" id="IPR023750">
    <property type="entry name" value="RbsD-like_sf"/>
</dbReference>
<dbReference type="InterPro" id="IPR007721">
    <property type="entry name" value="RbsD_FucU"/>
</dbReference>
<dbReference type="NCBIfam" id="NF008761">
    <property type="entry name" value="PRK11797.1"/>
    <property type="match status" value="1"/>
</dbReference>
<dbReference type="PANTHER" id="PTHR37831">
    <property type="entry name" value="D-RIBOSE PYRANASE"/>
    <property type="match status" value="1"/>
</dbReference>
<dbReference type="PANTHER" id="PTHR37831:SF1">
    <property type="entry name" value="D-RIBOSE PYRANASE"/>
    <property type="match status" value="1"/>
</dbReference>
<dbReference type="Pfam" id="PF05025">
    <property type="entry name" value="RbsD_FucU"/>
    <property type="match status" value="1"/>
</dbReference>
<dbReference type="SUPFAM" id="SSF102546">
    <property type="entry name" value="RbsD-like"/>
    <property type="match status" value="1"/>
</dbReference>